<dbReference type="EMBL" id="AJ428413">
    <property type="protein sequence ID" value="CAD28761.1"/>
    <property type="molecule type" value="Genomic_DNA"/>
</dbReference>
<dbReference type="RefSeq" id="NP_862794.1">
    <property type="nucleotide sequence ID" value="NC_004993.1"/>
</dbReference>
<dbReference type="SMR" id="Q7YJT8"/>
<dbReference type="GeneID" id="2598042"/>
<dbReference type="GO" id="GO:0009507">
    <property type="term" value="C:chloroplast"/>
    <property type="evidence" value="ECO:0007669"/>
    <property type="project" value="UniProtKB-SubCell"/>
</dbReference>
<dbReference type="GO" id="GO:0005763">
    <property type="term" value="C:mitochondrial small ribosomal subunit"/>
    <property type="evidence" value="ECO:0007669"/>
    <property type="project" value="TreeGrafter"/>
</dbReference>
<dbReference type="GO" id="GO:0019843">
    <property type="term" value="F:rRNA binding"/>
    <property type="evidence" value="ECO:0007669"/>
    <property type="project" value="UniProtKB-UniRule"/>
</dbReference>
<dbReference type="GO" id="GO:0003735">
    <property type="term" value="F:structural constituent of ribosome"/>
    <property type="evidence" value="ECO:0007669"/>
    <property type="project" value="InterPro"/>
</dbReference>
<dbReference type="GO" id="GO:0000028">
    <property type="term" value="P:ribosomal small subunit assembly"/>
    <property type="evidence" value="ECO:0007669"/>
    <property type="project" value="TreeGrafter"/>
</dbReference>
<dbReference type="GO" id="GO:0006412">
    <property type="term" value="P:translation"/>
    <property type="evidence" value="ECO:0007669"/>
    <property type="project" value="UniProtKB-UniRule"/>
</dbReference>
<dbReference type="FunFam" id="3.30.860.10:FF:000001">
    <property type="entry name" value="30S ribosomal protein S19"/>
    <property type="match status" value="1"/>
</dbReference>
<dbReference type="Gene3D" id="3.30.860.10">
    <property type="entry name" value="30s Ribosomal Protein S19, Chain A"/>
    <property type="match status" value="1"/>
</dbReference>
<dbReference type="HAMAP" id="MF_00531">
    <property type="entry name" value="Ribosomal_uS19"/>
    <property type="match status" value="1"/>
</dbReference>
<dbReference type="InterPro" id="IPR002222">
    <property type="entry name" value="Ribosomal_uS19"/>
</dbReference>
<dbReference type="InterPro" id="IPR005732">
    <property type="entry name" value="Ribosomal_uS19_bac-type"/>
</dbReference>
<dbReference type="InterPro" id="IPR020934">
    <property type="entry name" value="Ribosomal_uS19_CS"/>
</dbReference>
<dbReference type="InterPro" id="IPR023575">
    <property type="entry name" value="Ribosomal_uS19_SF"/>
</dbReference>
<dbReference type="NCBIfam" id="TIGR01050">
    <property type="entry name" value="rpsS_bact"/>
    <property type="match status" value="1"/>
</dbReference>
<dbReference type="PANTHER" id="PTHR11880">
    <property type="entry name" value="RIBOSOMAL PROTEIN S19P FAMILY MEMBER"/>
    <property type="match status" value="1"/>
</dbReference>
<dbReference type="PANTHER" id="PTHR11880:SF8">
    <property type="entry name" value="SMALL RIBOSOMAL SUBUNIT PROTEIN US19M"/>
    <property type="match status" value="1"/>
</dbReference>
<dbReference type="Pfam" id="PF00203">
    <property type="entry name" value="Ribosomal_S19"/>
    <property type="match status" value="1"/>
</dbReference>
<dbReference type="PIRSF" id="PIRSF002144">
    <property type="entry name" value="Ribosomal_S19"/>
    <property type="match status" value="1"/>
</dbReference>
<dbReference type="PRINTS" id="PR00975">
    <property type="entry name" value="RIBOSOMALS19"/>
</dbReference>
<dbReference type="SUPFAM" id="SSF54570">
    <property type="entry name" value="Ribosomal protein S19"/>
    <property type="match status" value="1"/>
</dbReference>
<dbReference type="PROSITE" id="PS00323">
    <property type="entry name" value="RIBOSOMAL_S19"/>
    <property type="match status" value="1"/>
</dbReference>
<gene>
    <name evidence="1" type="primary">rps19</name>
</gene>
<reference key="1">
    <citation type="journal article" date="2003" name="Plant Syst. Evol.">
        <title>The chloroplast genome of the 'basal' angiosperm Calycanthus fertilis -- structural and phylogenetic analyses.</title>
        <authorList>
            <person name="Goremykin V."/>
            <person name="Hirsch-Ernst K.I."/>
            <person name="Woelfl S."/>
            <person name="Hellwig F.H."/>
        </authorList>
    </citation>
    <scope>NUCLEOTIDE SEQUENCE [LARGE SCALE GENOMIC DNA]</scope>
</reference>
<sequence>MTRSLKKNPFVANHLLAKIEKLNMREEKETIVTWSRASTIIPTMIGHTIAIHNGKEHLPIFITDRMVGHKLGEFAPTLTFRGHARTDTRSRR</sequence>
<name>RR19_CALFG</name>
<accession>Q7YJT8</accession>
<feature type="chain" id="PRO_0000129956" description="Small ribosomal subunit protein uS19c">
    <location>
        <begin position="1"/>
        <end position="92"/>
    </location>
</feature>
<geneLocation type="chloroplast"/>
<evidence type="ECO:0000255" key="1">
    <source>
        <dbReference type="HAMAP-Rule" id="MF_00531"/>
    </source>
</evidence>
<evidence type="ECO:0000305" key="2"/>
<proteinExistence type="inferred from homology"/>
<protein>
    <recommendedName>
        <fullName evidence="1">Small ribosomal subunit protein uS19c</fullName>
    </recommendedName>
    <alternativeName>
        <fullName evidence="2">30S ribosomal protein S19, chloroplastic</fullName>
    </alternativeName>
</protein>
<organism>
    <name type="scientific">Calycanthus floridus var. glaucus</name>
    <name type="common">Eastern sweetshrub</name>
    <name type="synonym">Calycanthus fertilis var. ferax</name>
    <dbReference type="NCBI Taxonomy" id="212734"/>
    <lineage>
        <taxon>Eukaryota</taxon>
        <taxon>Viridiplantae</taxon>
        <taxon>Streptophyta</taxon>
        <taxon>Embryophyta</taxon>
        <taxon>Tracheophyta</taxon>
        <taxon>Spermatophyta</taxon>
        <taxon>Magnoliopsida</taxon>
        <taxon>Magnoliidae</taxon>
        <taxon>Laurales</taxon>
        <taxon>Calycanthaceae</taxon>
        <taxon>Calycanthus</taxon>
    </lineage>
</organism>
<keyword id="KW-0150">Chloroplast</keyword>
<keyword id="KW-0934">Plastid</keyword>
<keyword id="KW-0687">Ribonucleoprotein</keyword>
<keyword id="KW-0689">Ribosomal protein</keyword>
<keyword id="KW-0694">RNA-binding</keyword>
<keyword id="KW-0699">rRNA-binding</keyword>
<comment type="function">
    <text evidence="1">Protein S19 forms a complex with S13 that binds strongly to the 16S ribosomal RNA.</text>
</comment>
<comment type="subcellular location">
    <subcellularLocation>
        <location>Plastid</location>
        <location>Chloroplast</location>
    </subcellularLocation>
</comment>
<comment type="similarity">
    <text evidence="1">Belongs to the universal ribosomal protein uS19 family.</text>
</comment>